<organism>
    <name type="scientific">Oryza nivara</name>
    <name type="common">Indian wild rice</name>
    <name type="synonym">Oryza sativa f. spontanea</name>
    <dbReference type="NCBI Taxonomy" id="4536"/>
    <lineage>
        <taxon>Eukaryota</taxon>
        <taxon>Viridiplantae</taxon>
        <taxon>Streptophyta</taxon>
        <taxon>Embryophyta</taxon>
        <taxon>Tracheophyta</taxon>
        <taxon>Spermatophyta</taxon>
        <taxon>Magnoliopsida</taxon>
        <taxon>Liliopsida</taxon>
        <taxon>Poales</taxon>
        <taxon>Poaceae</taxon>
        <taxon>BOP clade</taxon>
        <taxon>Oryzoideae</taxon>
        <taxon>Oryzeae</taxon>
        <taxon>Oryzinae</taxon>
        <taxon>Oryza</taxon>
    </lineage>
</organism>
<accession>Q6END9</accession>
<gene>
    <name evidence="1" type="primary">infA</name>
</gene>
<comment type="function">
    <text evidence="1">One of the essential components for the initiation of protein synthesis. Stabilizes the binding of IF-2 and IF-3 on the 30S subunit to which N-formylmethionyl-tRNA(fMet) subsequently binds. Helps modulate mRNA selection, yielding the 30S pre-initiation complex (PIC). Upon addition of the 50S ribosomal subunit IF-1, IF-2 and IF-3 are released leaving the mature 70S translation initiation complex.</text>
</comment>
<comment type="subunit">
    <text evidence="1">Component of the 30S ribosomal translation pre-initiation complex which assembles on the 30S ribosome in the order IF-2 and IF-3, IF-1 and N-formylmethionyl-tRNA(fMet); mRNA recruitment can occur at any time during PIC assembly.</text>
</comment>
<comment type="subcellular location">
    <subcellularLocation>
        <location evidence="1">Plastid</location>
        <location evidence="1">Chloroplast</location>
    </subcellularLocation>
</comment>
<comment type="similarity">
    <text evidence="1">Belongs to the IF-1 family.</text>
</comment>
<name>IF1C_ORYNI</name>
<evidence type="ECO:0000255" key="1">
    <source>
        <dbReference type="HAMAP-Rule" id="MF_00075"/>
    </source>
</evidence>
<evidence type="ECO:0000256" key="2">
    <source>
        <dbReference type="SAM" id="MobiDB-lite"/>
    </source>
</evidence>
<evidence type="ECO:0000312" key="3">
    <source>
        <dbReference type="Proteomes" id="UP000006591"/>
    </source>
</evidence>
<feature type="chain" id="PRO_0000095942" description="Translation initiation factor IF-1, chloroplastic">
    <location>
        <begin position="1"/>
        <end position="107"/>
    </location>
</feature>
<feature type="domain" description="S1-like" evidence="1">
    <location>
        <begin position="8"/>
        <end position="83"/>
    </location>
</feature>
<feature type="region of interest" description="Disordered" evidence="2">
    <location>
        <begin position="81"/>
        <end position="107"/>
    </location>
</feature>
<feature type="compositionally biased region" description="Basic and acidic residues" evidence="2">
    <location>
        <begin position="83"/>
        <end position="107"/>
    </location>
</feature>
<dbReference type="EMBL" id="AP006728">
    <property type="protein sequence ID" value="BAD26813.1"/>
    <property type="molecule type" value="Genomic_DNA"/>
</dbReference>
<dbReference type="RefSeq" id="YP_052784.1">
    <property type="nucleotide sequence ID" value="NC_005973.1"/>
</dbReference>
<dbReference type="SMR" id="Q6END9"/>
<dbReference type="STRING" id="4536.Q6END9"/>
<dbReference type="GeneID" id="2885917"/>
<dbReference type="Proteomes" id="UP000006591">
    <property type="component" value="Chloroplast"/>
</dbReference>
<dbReference type="GO" id="GO:0009507">
    <property type="term" value="C:chloroplast"/>
    <property type="evidence" value="ECO:0007669"/>
    <property type="project" value="UniProtKB-SubCell"/>
</dbReference>
<dbReference type="GO" id="GO:0005829">
    <property type="term" value="C:cytosol"/>
    <property type="evidence" value="ECO:0007669"/>
    <property type="project" value="TreeGrafter"/>
</dbReference>
<dbReference type="GO" id="GO:0009536">
    <property type="term" value="C:plastid"/>
    <property type="evidence" value="ECO:0000305"/>
    <property type="project" value="Gramene"/>
</dbReference>
<dbReference type="GO" id="GO:0043022">
    <property type="term" value="F:ribosome binding"/>
    <property type="evidence" value="ECO:0007669"/>
    <property type="project" value="UniProtKB-UniRule"/>
</dbReference>
<dbReference type="GO" id="GO:0019843">
    <property type="term" value="F:rRNA binding"/>
    <property type="evidence" value="ECO:0007669"/>
    <property type="project" value="UniProtKB-UniRule"/>
</dbReference>
<dbReference type="GO" id="GO:0003743">
    <property type="term" value="F:translation initiation factor activity"/>
    <property type="evidence" value="ECO:0007669"/>
    <property type="project" value="UniProtKB-UniRule"/>
</dbReference>
<dbReference type="CDD" id="cd04451">
    <property type="entry name" value="S1_IF1"/>
    <property type="match status" value="1"/>
</dbReference>
<dbReference type="FunFam" id="2.40.50.140:FF:000019">
    <property type="entry name" value="Translation initiation factor IF-1, chloroplastic"/>
    <property type="match status" value="1"/>
</dbReference>
<dbReference type="Gene3D" id="2.40.50.140">
    <property type="entry name" value="Nucleic acid-binding proteins"/>
    <property type="match status" value="1"/>
</dbReference>
<dbReference type="HAMAP" id="MF_00075">
    <property type="entry name" value="IF_1"/>
    <property type="match status" value="1"/>
</dbReference>
<dbReference type="InterPro" id="IPR012340">
    <property type="entry name" value="NA-bd_OB-fold"/>
</dbReference>
<dbReference type="InterPro" id="IPR006196">
    <property type="entry name" value="RNA-binding_domain_S1_IF1"/>
</dbReference>
<dbReference type="InterPro" id="IPR003029">
    <property type="entry name" value="S1_domain"/>
</dbReference>
<dbReference type="InterPro" id="IPR004368">
    <property type="entry name" value="TIF_IF1"/>
</dbReference>
<dbReference type="NCBIfam" id="TIGR00008">
    <property type="entry name" value="infA"/>
    <property type="match status" value="1"/>
</dbReference>
<dbReference type="PANTHER" id="PTHR33370">
    <property type="entry name" value="TRANSLATION INITIATION FACTOR IF-1, CHLOROPLASTIC"/>
    <property type="match status" value="1"/>
</dbReference>
<dbReference type="PANTHER" id="PTHR33370:SF1">
    <property type="entry name" value="TRANSLATION INITIATION FACTOR IF-1, CHLOROPLASTIC"/>
    <property type="match status" value="1"/>
</dbReference>
<dbReference type="Pfam" id="PF01176">
    <property type="entry name" value="eIF-1a"/>
    <property type="match status" value="1"/>
</dbReference>
<dbReference type="SMART" id="SM00316">
    <property type="entry name" value="S1"/>
    <property type="match status" value="1"/>
</dbReference>
<dbReference type="SUPFAM" id="SSF50249">
    <property type="entry name" value="Nucleic acid-binding proteins"/>
    <property type="match status" value="1"/>
</dbReference>
<dbReference type="PROSITE" id="PS50832">
    <property type="entry name" value="S1_IF1_TYPE"/>
    <property type="match status" value="1"/>
</dbReference>
<sequence>MTEKKNRREKKNPREAKITFEGLVMEALPNGMFRVRLENDTIILGYISGKIRSSSIRILMGDRVKIEVSRYDSSKGRIIYRLPHKDSKRTEDSKDTEDLKDTKDSKG</sequence>
<geneLocation type="chloroplast"/>
<reference key="1">
    <citation type="journal article" date="2004" name="Gene">
        <title>The complete nucleotide sequence of wild rice (Oryza nivara) chloroplast genome: first genome wide comparative sequence analysis of wild and cultivated rice.</title>
        <authorList>
            <person name="Masood M.S."/>
            <person name="Nishikawa T."/>
            <person name="Fukuoka S."/>
            <person name="Njenga P.K."/>
            <person name="Tsudzuki T."/>
            <person name="Kadowaki K."/>
        </authorList>
    </citation>
    <scope>NUCLEOTIDE SEQUENCE [LARGE SCALE GENOMIC DNA]</scope>
    <source>
        <strain evidence="3">cv. SL10</strain>
    </source>
</reference>
<keyword id="KW-0150">Chloroplast</keyword>
<keyword id="KW-0396">Initiation factor</keyword>
<keyword id="KW-0934">Plastid</keyword>
<keyword id="KW-0648">Protein biosynthesis</keyword>
<keyword id="KW-1185">Reference proteome</keyword>
<keyword id="KW-0694">RNA-binding</keyword>
<keyword id="KW-0699">rRNA-binding</keyword>
<proteinExistence type="inferred from homology"/>
<protein>
    <recommendedName>
        <fullName evidence="1">Translation initiation factor IF-1, chloroplastic</fullName>
    </recommendedName>
</protein>